<keyword id="KW-0474">Menaquinone biosynthesis</keyword>
<keyword id="KW-0489">Methyltransferase</keyword>
<keyword id="KW-0949">S-adenosyl-L-methionine</keyword>
<keyword id="KW-0808">Transferase</keyword>
<reference key="1">
    <citation type="journal article" date="2006" name="J. Bacteriol.">
        <title>Whole-genome sequence of Listeria welshimeri reveals common steps in genome reduction with Listeria innocua as compared to Listeria monocytogenes.</title>
        <authorList>
            <person name="Hain T."/>
            <person name="Steinweg C."/>
            <person name="Kuenne C.T."/>
            <person name="Billion A."/>
            <person name="Ghai R."/>
            <person name="Chatterjee S.S."/>
            <person name="Domann E."/>
            <person name="Kaerst U."/>
            <person name="Goesmann A."/>
            <person name="Bekel T."/>
            <person name="Bartels D."/>
            <person name="Kaiser O."/>
            <person name="Meyer F."/>
            <person name="Puehler A."/>
            <person name="Weisshaar B."/>
            <person name="Wehland J."/>
            <person name="Liang C."/>
            <person name="Dandekar T."/>
            <person name="Lampidis R."/>
            <person name="Kreft J."/>
            <person name="Goebel W."/>
            <person name="Chakraborty T."/>
        </authorList>
    </citation>
    <scope>NUCLEOTIDE SEQUENCE [LARGE SCALE GENOMIC DNA]</scope>
    <source>
        <strain>ATCC 35897 / DSM 20650 / CCUG 15529 / CIP 8149 / NCTC 11857 / SLCC 5334 / V8</strain>
    </source>
</reference>
<sequence length="236" mass="27176">MTETKEEKVHKVFEKISPSYDRMNSVISFKLHVKWRKETMKLMRVQKGTNVLDVCCGTADWSIMMAEEIGPEGHVTGLDFSENMLKVGREKVKEADLHNVELIHGNAMELPFPDNSFDYVTIGFGLRNVPDYMQVLREMYRVLKPGGQLACIDTSQPNIPGWKQVFNAYFRYVMPVFGKFFAKSYKEYSWLQESTREFPGMSKLAEMFQDAGFSYVRYISHSGGASATHFGFKKKE</sequence>
<organism>
    <name type="scientific">Listeria welshimeri serovar 6b (strain ATCC 35897 / DSM 20650 / CCUG 15529 / CIP 8149 / NCTC 11857 / SLCC 5334 / V8)</name>
    <dbReference type="NCBI Taxonomy" id="386043"/>
    <lineage>
        <taxon>Bacteria</taxon>
        <taxon>Bacillati</taxon>
        <taxon>Bacillota</taxon>
        <taxon>Bacilli</taxon>
        <taxon>Bacillales</taxon>
        <taxon>Listeriaceae</taxon>
        <taxon>Listeria</taxon>
    </lineage>
</organism>
<feature type="chain" id="PRO_1000056256" description="Demethylmenaquinone methyltransferase">
    <location>
        <begin position="1"/>
        <end position="236"/>
    </location>
</feature>
<feature type="binding site" evidence="1">
    <location>
        <position position="58"/>
    </location>
    <ligand>
        <name>S-adenosyl-L-methionine</name>
        <dbReference type="ChEBI" id="CHEBI:59789"/>
    </ligand>
</feature>
<feature type="binding site" evidence="1">
    <location>
        <position position="79"/>
    </location>
    <ligand>
        <name>S-adenosyl-L-methionine</name>
        <dbReference type="ChEBI" id="CHEBI:59789"/>
    </ligand>
</feature>
<feature type="binding site" evidence="1">
    <location>
        <begin position="106"/>
        <end position="107"/>
    </location>
    <ligand>
        <name>S-adenosyl-L-methionine</name>
        <dbReference type="ChEBI" id="CHEBI:59789"/>
    </ligand>
</feature>
<name>MENG_LISW6</name>
<dbReference type="EC" id="2.1.1.163" evidence="1"/>
<dbReference type="EMBL" id="AM263198">
    <property type="protein sequence ID" value="CAK21375.1"/>
    <property type="molecule type" value="Genomic_DNA"/>
</dbReference>
<dbReference type="RefSeq" id="WP_011702723.1">
    <property type="nucleotide sequence ID" value="NC_008555.1"/>
</dbReference>
<dbReference type="SMR" id="A0AK43"/>
<dbReference type="STRING" id="386043.lwe1957"/>
<dbReference type="GeneID" id="61189857"/>
<dbReference type="KEGG" id="lwe:lwe1957"/>
<dbReference type="eggNOG" id="COG2226">
    <property type="taxonomic scope" value="Bacteria"/>
</dbReference>
<dbReference type="HOGENOM" id="CLU_037990_0_0_9"/>
<dbReference type="OrthoDB" id="9808140at2"/>
<dbReference type="UniPathway" id="UPA00079">
    <property type="reaction ID" value="UER00169"/>
</dbReference>
<dbReference type="Proteomes" id="UP000000779">
    <property type="component" value="Chromosome"/>
</dbReference>
<dbReference type="GO" id="GO:0043770">
    <property type="term" value="F:demethylmenaquinone methyltransferase activity"/>
    <property type="evidence" value="ECO:0007669"/>
    <property type="project" value="UniProtKB-UniRule"/>
</dbReference>
<dbReference type="GO" id="GO:0009234">
    <property type="term" value="P:menaquinone biosynthetic process"/>
    <property type="evidence" value="ECO:0007669"/>
    <property type="project" value="UniProtKB-UniRule"/>
</dbReference>
<dbReference type="GO" id="GO:0032259">
    <property type="term" value="P:methylation"/>
    <property type="evidence" value="ECO:0007669"/>
    <property type="project" value="UniProtKB-KW"/>
</dbReference>
<dbReference type="CDD" id="cd02440">
    <property type="entry name" value="AdoMet_MTases"/>
    <property type="match status" value="1"/>
</dbReference>
<dbReference type="FunFam" id="3.40.50.150:FF:000086">
    <property type="entry name" value="Demethylmenaquinone methyltransferase"/>
    <property type="match status" value="1"/>
</dbReference>
<dbReference type="Gene3D" id="3.40.50.150">
    <property type="entry name" value="Vaccinia Virus protein VP39"/>
    <property type="match status" value="1"/>
</dbReference>
<dbReference type="HAMAP" id="MF_01813">
    <property type="entry name" value="MenG_UbiE_methyltr"/>
    <property type="match status" value="1"/>
</dbReference>
<dbReference type="InterPro" id="IPR014122">
    <property type="entry name" value="MenG_heptapren"/>
</dbReference>
<dbReference type="InterPro" id="IPR029063">
    <property type="entry name" value="SAM-dependent_MTases_sf"/>
</dbReference>
<dbReference type="InterPro" id="IPR004033">
    <property type="entry name" value="UbiE/COQ5_MeTrFase"/>
</dbReference>
<dbReference type="InterPro" id="IPR023576">
    <property type="entry name" value="UbiE/COQ5_MeTrFase_CS"/>
</dbReference>
<dbReference type="NCBIfam" id="TIGR02752">
    <property type="entry name" value="MenG_heptapren"/>
    <property type="match status" value="1"/>
</dbReference>
<dbReference type="NCBIfam" id="TIGR01934">
    <property type="entry name" value="MenG_MenH_UbiE"/>
    <property type="match status" value="1"/>
</dbReference>
<dbReference type="NCBIfam" id="NF001243">
    <property type="entry name" value="PRK00216.1-4"/>
    <property type="match status" value="1"/>
</dbReference>
<dbReference type="NCBIfam" id="NF001244">
    <property type="entry name" value="PRK00216.1-5"/>
    <property type="match status" value="1"/>
</dbReference>
<dbReference type="PANTHER" id="PTHR43591:SF24">
    <property type="entry name" value="2-METHOXY-6-POLYPRENYL-1,4-BENZOQUINOL METHYLASE, MITOCHONDRIAL"/>
    <property type="match status" value="1"/>
</dbReference>
<dbReference type="PANTHER" id="PTHR43591">
    <property type="entry name" value="METHYLTRANSFERASE"/>
    <property type="match status" value="1"/>
</dbReference>
<dbReference type="Pfam" id="PF01209">
    <property type="entry name" value="Ubie_methyltran"/>
    <property type="match status" value="1"/>
</dbReference>
<dbReference type="SUPFAM" id="SSF53335">
    <property type="entry name" value="S-adenosyl-L-methionine-dependent methyltransferases"/>
    <property type="match status" value="1"/>
</dbReference>
<dbReference type="PROSITE" id="PS51608">
    <property type="entry name" value="SAM_MT_UBIE"/>
    <property type="match status" value="1"/>
</dbReference>
<dbReference type="PROSITE" id="PS01183">
    <property type="entry name" value="UBIE_1"/>
    <property type="match status" value="1"/>
</dbReference>
<dbReference type="PROSITE" id="PS01184">
    <property type="entry name" value="UBIE_2"/>
    <property type="match status" value="1"/>
</dbReference>
<evidence type="ECO:0000255" key="1">
    <source>
        <dbReference type="HAMAP-Rule" id="MF_01813"/>
    </source>
</evidence>
<comment type="function">
    <text evidence="1">Methyltransferase required for the conversion of demethylmenaquinol (DMKH2) to menaquinol (MKH2).</text>
</comment>
<comment type="catalytic activity">
    <reaction evidence="1">
        <text>a 2-demethylmenaquinol + S-adenosyl-L-methionine = a menaquinol + S-adenosyl-L-homocysteine + H(+)</text>
        <dbReference type="Rhea" id="RHEA:42640"/>
        <dbReference type="Rhea" id="RHEA-COMP:9539"/>
        <dbReference type="Rhea" id="RHEA-COMP:9563"/>
        <dbReference type="ChEBI" id="CHEBI:15378"/>
        <dbReference type="ChEBI" id="CHEBI:18151"/>
        <dbReference type="ChEBI" id="CHEBI:55437"/>
        <dbReference type="ChEBI" id="CHEBI:57856"/>
        <dbReference type="ChEBI" id="CHEBI:59789"/>
        <dbReference type="EC" id="2.1.1.163"/>
    </reaction>
</comment>
<comment type="pathway">
    <text evidence="1">Quinol/quinone metabolism; menaquinone biosynthesis; menaquinol from 1,4-dihydroxy-2-naphthoate: step 2/2.</text>
</comment>
<comment type="similarity">
    <text evidence="1">Belongs to the class I-like SAM-binding methyltransferase superfamily. MenG/UbiE family.</text>
</comment>
<proteinExistence type="inferred from homology"/>
<gene>
    <name evidence="1" type="primary">menG</name>
    <name type="ordered locus">lwe1957</name>
</gene>
<protein>
    <recommendedName>
        <fullName evidence="1">Demethylmenaquinone methyltransferase</fullName>
        <ecNumber evidence="1">2.1.1.163</ecNumber>
    </recommendedName>
</protein>
<accession>A0AK43</accession>